<name>RPN6_YEAST</name>
<sequence length="434" mass="49774">MSLPGSKLEEARRLVNEKQYNEAEQVYLSLLDKDSSQSSAAAGASVDDKRRNEQETSILELGQLYVTMGAKDKLREFIPHSTEYMMQFAKSKTVKVLKTLIEKFEQVPDSLDDQIFVCEKSIEFAKREKRVFLKHSLSIKLATLHYQKKQYKDSLALINDLLREFKKLDDKPSLVDVHLLESKVYHKLRNLAKSKASLTAARTAANSIYCPTQTVAELDLMSGILHCEDKDYKTAFSYFFESFESYHNLTTHNSYEKACQVLKYMLLSKIMLNLIDDVKNILNAKYTKETYQSRGIDAMKAVAEAYNNRSLLDFNTALKQYEKELMGDELTRSHFNALYDTLLESNLCKIIEPFECVEISHISKIIGLDTQQVEGKLSQMILDKIFYGVLDQGNGWLYVYETPNQDATYDSALELVGQLNKVVDQLFEKASVLY</sequence>
<accession>Q12377</accession>
<accession>D6VRQ3</accession>
<gene>
    <name type="primary">RPN6</name>
    <name type="synonym">NAS4</name>
    <name type="ordered locus">YDL097C</name>
    <name type="ORF">D2381</name>
</gene>
<feature type="initiator methionine" description="Removed" evidence="3 8">
    <location>
        <position position="1"/>
    </location>
</feature>
<feature type="chain" id="PRO_0000173860" description="26S proteasome regulatory subunit RPN6">
    <location>
        <begin position="2"/>
        <end position="434"/>
    </location>
</feature>
<feature type="domain" description="PCI" evidence="1">
    <location>
        <begin position="235"/>
        <end position="404"/>
    </location>
</feature>
<feature type="modified residue" description="N-acetylserine" evidence="3 8">
    <location>
        <position position="2"/>
    </location>
</feature>
<feature type="mutagenesis site" description="In rpn6-2; temperature-sensitive mutant that shows defects in proteasome assembly when incubated at 37 degrees Celsius; when associated with P-377." evidence="5">
    <original>F</original>
    <variation>L</variation>
    <location>
        <position position="132"/>
    </location>
</feature>
<feature type="mutagenesis site" description="In rpn6-2; temperature-sensitive mutant that shows defects in proteasome assembly when incubated at 37 degrees Celsius; when associated with L-132." evidence="5">
    <original>L</original>
    <variation>P</variation>
    <location>
        <position position="377"/>
    </location>
</feature>
<feature type="helix" evidence="9">
    <location>
        <begin position="55"/>
        <end position="57"/>
    </location>
</feature>
<feature type="helix" evidence="9">
    <location>
        <begin position="59"/>
        <end position="64"/>
    </location>
</feature>
<feature type="turn" evidence="9">
    <location>
        <begin position="65"/>
        <end position="68"/>
    </location>
</feature>
<feature type="helix" evidence="9">
    <location>
        <begin position="71"/>
        <end position="83"/>
    </location>
</feature>
<feature type="turn" evidence="9">
    <location>
        <begin position="84"/>
        <end position="88"/>
    </location>
</feature>
<feature type="helix" evidence="9">
    <location>
        <begin position="94"/>
        <end position="105"/>
    </location>
</feature>
<feature type="strand" evidence="9">
    <location>
        <begin position="106"/>
        <end position="109"/>
    </location>
</feature>
<feature type="helix" evidence="9">
    <location>
        <begin position="112"/>
        <end position="127"/>
    </location>
</feature>
<feature type="helix" evidence="9">
    <location>
        <begin position="131"/>
        <end position="144"/>
    </location>
</feature>
<feature type="turn" evidence="9">
    <location>
        <begin position="145"/>
        <end position="148"/>
    </location>
</feature>
<feature type="helix" evidence="9">
    <location>
        <begin position="152"/>
        <end position="168"/>
    </location>
</feature>
<feature type="helix" evidence="9">
    <location>
        <begin position="171"/>
        <end position="187"/>
    </location>
</feature>
<feature type="helix" evidence="9">
    <location>
        <begin position="192"/>
        <end position="207"/>
    </location>
</feature>
<feature type="helix" evidence="9">
    <location>
        <begin position="212"/>
        <end position="228"/>
    </location>
</feature>
<feature type="helix" evidence="9">
    <location>
        <begin position="232"/>
        <end position="248"/>
    </location>
</feature>
<feature type="helix" evidence="9">
    <location>
        <begin position="254"/>
        <end position="272"/>
    </location>
</feature>
<feature type="helix" evidence="9">
    <location>
        <begin position="276"/>
        <end position="281"/>
    </location>
</feature>
<feature type="turn" evidence="9">
    <location>
        <begin position="284"/>
        <end position="287"/>
    </location>
</feature>
<feature type="helix" evidence="9">
    <location>
        <begin position="288"/>
        <end position="291"/>
    </location>
</feature>
<feature type="helix" evidence="9">
    <location>
        <begin position="294"/>
        <end position="308"/>
    </location>
</feature>
<feature type="helix" evidence="9">
    <location>
        <begin position="311"/>
        <end position="316"/>
    </location>
</feature>
<feature type="turn" evidence="9">
    <location>
        <begin position="317"/>
        <end position="321"/>
    </location>
</feature>
<feature type="helix" evidence="9">
    <location>
        <begin position="322"/>
        <end position="325"/>
    </location>
</feature>
<feature type="helix" evidence="9">
    <location>
        <begin position="329"/>
        <end position="351"/>
    </location>
</feature>
<feature type="strand" evidence="9">
    <location>
        <begin position="354"/>
        <end position="356"/>
    </location>
</feature>
<feature type="helix" evidence="9">
    <location>
        <begin position="359"/>
        <end position="366"/>
    </location>
</feature>
<feature type="helix" evidence="9">
    <location>
        <begin position="370"/>
        <end position="382"/>
    </location>
</feature>
<feature type="strand" evidence="9">
    <location>
        <begin position="388"/>
        <end position="391"/>
    </location>
</feature>
<feature type="turn" evidence="9">
    <location>
        <begin position="392"/>
        <end position="395"/>
    </location>
</feature>
<feature type="strand" evidence="9">
    <location>
        <begin position="396"/>
        <end position="399"/>
    </location>
</feature>
<feature type="helix" evidence="9">
    <location>
        <begin position="407"/>
        <end position="428"/>
    </location>
</feature>
<keyword id="KW-0002">3D-structure</keyword>
<keyword id="KW-0007">Acetylation</keyword>
<keyword id="KW-0903">Direct protein sequencing</keyword>
<keyword id="KW-0647">Proteasome</keyword>
<keyword id="KW-1185">Reference proteome</keyword>
<dbReference type="EMBL" id="X95644">
    <property type="protein sequence ID" value="CAA64916.1"/>
    <property type="molecule type" value="Genomic_DNA"/>
</dbReference>
<dbReference type="EMBL" id="Z74145">
    <property type="protein sequence ID" value="CAA98664.1"/>
    <property type="molecule type" value="Genomic_DNA"/>
</dbReference>
<dbReference type="EMBL" id="BK006938">
    <property type="protein sequence ID" value="DAA11763.1"/>
    <property type="molecule type" value="Genomic_DNA"/>
</dbReference>
<dbReference type="PIR" id="S67639">
    <property type="entry name" value="S67639"/>
</dbReference>
<dbReference type="RefSeq" id="NP_010186.1">
    <property type="nucleotide sequence ID" value="NM_001180156.1"/>
</dbReference>
<dbReference type="PDB" id="3J47">
    <property type="method" value="EM"/>
    <property type="chains" value="Q=407-431"/>
</dbReference>
<dbReference type="PDB" id="3JCK">
    <property type="method" value="EM"/>
    <property type="resolution" value="3.50 A"/>
    <property type="chains" value="C=1-434"/>
</dbReference>
<dbReference type="PDB" id="3JCO">
    <property type="method" value="EM"/>
    <property type="resolution" value="4.80 A"/>
    <property type="chains" value="Q=1-434"/>
</dbReference>
<dbReference type="PDB" id="3JCP">
    <property type="method" value="EM"/>
    <property type="resolution" value="4.60 A"/>
    <property type="chains" value="Q=1-434"/>
</dbReference>
<dbReference type="PDB" id="4CR2">
    <property type="method" value="EM"/>
    <property type="resolution" value="7.70 A"/>
    <property type="chains" value="Q=1-434"/>
</dbReference>
<dbReference type="PDB" id="4CR3">
    <property type="method" value="EM"/>
    <property type="resolution" value="9.30 A"/>
    <property type="chains" value="Q=1-434"/>
</dbReference>
<dbReference type="PDB" id="4CR4">
    <property type="method" value="EM"/>
    <property type="resolution" value="8.80 A"/>
    <property type="chains" value="Q=1-434"/>
</dbReference>
<dbReference type="PDB" id="5A5B">
    <property type="method" value="EM"/>
    <property type="resolution" value="9.50 A"/>
    <property type="chains" value="Q=1-434"/>
</dbReference>
<dbReference type="PDB" id="5MPB">
    <property type="method" value="EM"/>
    <property type="resolution" value="7.80 A"/>
    <property type="chains" value="Q=1-434"/>
</dbReference>
<dbReference type="PDB" id="5MPC">
    <property type="method" value="EM"/>
    <property type="resolution" value="7.70 A"/>
    <property type="chains" value="Q=1-434"/>
</dbReference>
<dbReference type="PDB" id="5MPD">
    <property type="method" value="EM"/>
    <property type="resolution" value="4.10 A"/>
    <property type="chains" value="Q=1-434"/>
</dbReference>
<dbReference type="PDB" id="5MPE">
    <property type="method" value="EM"/>
    <property type="resolution" value="4.50 A"/>
    <property type="chains" value="Q=1-434"/>
</dbReference>
<dbReference type="PDB" id="5WVI">
    <property type="method" value="EM"/>
    <property type="resolution" value="6.30 A"/>
    <property type="chains" value="Q=1-434"/>
</dbReference>
<dbReference type="PDB" id="5WVK">
    <property type="method" value="EM"/>
    <property type="resolution" value="4.20 A"/>
    <property type="chains" value="Q=1-434"/>
</dbReference>
<dbReference type="PDB" id="6FVT">
    <property type="method" value="EM"/>
    <property type="resolution" value="4.10 A"/>
    <property type="chains" value="Q=1-434"/>
</dbReference>
<dbReference type="PDB" id="6FVU">
    <property type="method" value="EM"/>
    <property type="resolution" value="4.50 A"/>
    <property type="chains" value="Q=1-434"/>
</dbReference>
<dbReference type="PDB" id="6FVV">
    <property type="method" value="EM"/>
    <property type="resolution" value="5.40 A"/>
    <property type="chains" value="Q=1-434"/>
</dbReference>
<dbReference type="PDB" id="6FVW">
    <property type="method" value="EM"/>
    <property type="resolution" value="4.50 A"/>
    <property type="chains" value="Q=1-434"/>
</dbReference>
<dbReference type="PDB" id="6FVX">
    <property type="method" value="EM"/>
    <property type="resolution" value="4.90 A"/>
    <property type="chains" value="Q=1-434"/>
</dbReference>
<dbReference type="PDB" id="6FVY">
    <property type="method" value="EM"/>
    <property type="resolution" value="6.10 A"/>
    <property type="chains" value="Q=1-434"/>
</dbReference>
<dbReference type="PDB" id="6J2C">
    <property type="method" value="EM"/>
    <property type="resolution" value="7.00 A"/>
    <property type="chains" value="Q=1-434"/>
</dbReference>
<dbReference type="PDB" id="6J2N">
    <property type="method" value="EM"/>
    <property type="resolution" value="7.50 A"/>
    <property type="chains" value="Q=1-434"/>
</dbReference>
<dbReference type="PDB" id="6J2Q">
    <property type="method" value="EM"/>
    <property type="resolution" value="3.80 A"/>
    <property type="chains" value="Q=1-434"/>
</dbReference>
<dbReference type="PDB" id="6J2X">
    <property type="method" value="EM"/>
    <property type="resolution" value="3.80 A"/>
    <property type="chains" value="Q=1-434"/>
</dbReference>
<dbReference type="PDB" id="6J30">
    <property type="method" value="EM"/>
    <property type="resolution" value="4.50 A"/>
    <property type="chains" value="Q=1-434"/>
</dbReference>
<dbReference type="PDB" id="7QO3">
    <property type="method" value="EM"/>
    <property type="resolution" value="6.10 A"/>
    <property type="chains" value="Q=1-434"/>
</dbReference>
<dbReference type="PDB" id="7QO5">
    <property type="method" value="EM"/>
    <property type="resolution" value="6.00 A"/>
    <property type="chains" value="Q=1-434"/>
</dbReference>
<dbReference type="PDBsum" id="3J47"/>
<dbReference type="PDBsum" id="3JCK"/>
<dbReference type="PDBsum" id="3JCO"/>
<dbReference type="PDBsum" id="3JCP"/>
<dbReference type="PDBsum" id="4CR2"/>
<dbReference type="PDBsum" id="4CR3"/>
<dbReference type="PDBsum" id="4CR4"/>
<dbReference type="PDBsum" id="5A5B"/>
<dbReference type="PDBsum" id="5MPB"/>
<dbReference type="PDBsum" id="5MPC"/>
<dbReference type="PDBsum" id="5MPD"/>
<dbReference type="PDBsum" id="5MPE"/>
<dbReference type="PDBsum" id="5WVI"/>
<dbReference type="PDBsum" id="5WVK"/>
<dbReference type="PDBsum" id="6FVT"/>
<dbReference type="PDBsum" id="6FVU"/>
<dbReference type="PDBsum" id="6FVV"/>
<dbReference type="PDBsum" id="6FVW"/>
<dbReference type="PDBsum" id="6FVX"/>
<dbReference type="PDBsum" id="6FVY"/>
<dbReference type="PDBsum" id="6J2C"/>
<dbReference type="PDBsum" id="6J2N"/>
<dbReference type="PDBsum" id="6J2Q"/>
<dbReference type="PDBsum" id="6J2X"/>
<dbReference type="PDBsum" id="6J30"/>
<dbReference type="PDBsum" id="7QO3"/>
<dbReference type="PDBsum" id="7QO5"/>
<dbReference type="EMDB" id="EMD-14082"/>
<dbReference type="EMDB" id="EMD-14084"/>
<dbReference type="EMDB" id="EMD-3136"/>
<dbReference type="EMDB" id="EMD-3536"/>
<dbReference type="EMDB" id="EMD-3537"/>
<dbReference type="EMDB" id="EMD-4321"/>
<dbReference type="EMDB" id="EMD-4322"/>
<dbReference type="EMDB" id="EMD-4323"/>
<dbReference type="EMDB" id="EMD-4324"/>
<dbReference type="EMDB" id="EMD-6693"/>
<dbReference type="EMDB" id="EMD-6694"/>
<dbReference type="EMDB" id="EMD-9769"/>
<dbReference type="EMDB" id="EMD-9770"/>
<dbReference type="EMDB" id="EMD-9771"/>
<dbReference type="EMDB" id="EMD-9772"/>
<dbReference type="EMDB" id="EMD-9773"/>
<dbReference type="SMR" id="Q12377"/>
<dbReference type="BioGRID" id="31965">
    <property type="interactions" value="745"/>
</dbReference>
<dbReference type="ComplexPortal" id="CPX-2262">
    <property type="entry name" value="26S proteasome complex"/>
</dbReference>
<dbReference type="DIP" id="DIP-1581N"/>
<dbReference type="FunCoup" id="Q12377">
    <property type="interactions" value="1423"/>
</dbReference>
<dbReference type="IntAct" id="Q12377">
    <property type="interactions" value="54"/>
</dbReference>
<dbReference type="MINT" id="Q12377"/>
<dbReference type="STRING" id="4932.YDL097C"/>
<dbReference type="iPTMnet" id="Q12377"/>
<dbReference type="PaxDb" id="4932-YDL097C"/>
<dbReference type="PeptideAtlas" id="Q12377"/>
<dbReference type="EnsemblFungi" id="YDL097C_mRNA">
    <property type="protein sequence ID" value="YDL097C"/>
    <property type="gene ID" value="YDL097C"/>
</dbReference>
<dbReference type="GeneID" id="851461"/>
<dbReference type="KEGG" id="sce:YDL097C"/>
<dbReference type="AGR" id="SGD:S000002255"/>
<dbReference type="SGD" id="S000002255">
    <property type="gene designation" value="RPN6"/>
</dbReference>
<dbReference type="VEuPathDB" id="FungiDB:YDL097C"/>
<dbReference type="eggNOG" id="KOG1463">
    <property type="taxonomic scope" value="Eukaryota"/>
</dbReference>
<dbReference type="GeneTree" id="ENSGT00530000063301"/>
<dbReference type="HOGENOM" id="CLU_029573_2_1_1"/>
<dbReference type="InParanoid" id="Q12377"/>
<dbReference type="OMA" id="ESKIYHA"/>
<dbReference type="OrthoDB" id="1418352at2759"/>
<dbReference type="BioCyc" id="YEAST:G3O-29500-MONOMER"/>
<dbReference type="Reactome" id="R-SCE-1236978">
    <property type="pathway name" value="Cross-presentation of soluble exogenous antigens (endosomes)"/>
</dbReference>
<dbReference type="Reactome" id="R-SCE-5668541">
    <property type="pathway name" value="TNFR2 non-canonical NF-kB pathway"/>
</dbReference>
<dbReference type="Reactome" id="R-SCE-5687128">
    <property type="pathway name" value="MAPK6/MAPK4 signaling"/>
</dbReference>
<dbReference type="Reactome" id="R-SCE-5689880">
    <property type="pathway name" value="Ub-specific processing proteases"/>
</dbReference>
<dbReference type="Reactome" id="R-SCE-6798695">
    <property type="pathway name" value="Neutrophil degranulation"/>
</dbReference>
<dbReference type="Reactome" id="R-SCE-68949">
    <property type="pathway name" value="Orc1 removal from chromatin"/>
</dbReference>
<dbReference type="Reactome" id="R-SCE-69017">
    <property type="pathway name" value="CDK-mediated phosphorylation and removal of Cdc6"/>
</dbReference>
<dbReference type="Reactome" id="R-SCE-69601">
    <property type="pathway name" value="Ubiquitin Mediated Degradation of Phosphorylated Cdc25A"/>
</dbReference>
<dbReference type="Reactome" id="R-SCE-8854050">
    <property type="pathway name" value="FBXL7 down-regulates AURKA during mitotic entry and in early mitosis"/>
</dbReference>
<dbReference type="Reactome" id="R-SCE-8948751">
    <property type="pathway name" value="Regulation of PTEN stability and activity"/>
</dbReference>
<dbReference type="Reactome" id="R-SCE-8951664">
    <property type="pathway name" value="Neddylation"/>
</dbReference>
<dbReference type="Reactome" id="R-SCE-9755511">
    <property type="pathway name" value="KEAP1-NFE2L2 pathway"/>
</dbReference>
<dbReference type="Reactome" id="R-SCE-983168">
    <property type="pathway name" value="Antigen processing: Ubiquitination &amp; Proteasome degradation"/>
</dbReference>
<dbReference type="Reactome" id="R-SCE-9907900">
    <property type="pathway name" value="Proteasome assembly"/>
</dbReference>
<dbReference type="BioGRID-ORCS" id="851461">
    <property type="hits" value="3 hits in 10 CRISPR screens"/>
</dbReference>
<dbReference type="EvolutionaryTrace" id="Q12377"/>
<dbReference type="PRO" id="PR:Q12377"/>
<dbReference type="Proteomes" id="UP000002311">
    <property type="component" value="Chromosome IV"/>
</dbReference>
<dbReference type="RNAct" id="Q12377">
    <property type="molecule type" value="protein"/>
</dbReference>
<dbReference type="GO" id="GO:0000502">
    <property type="term" value="C:proteasome complex"/>
    <property type="evidence" value="ECO:0000353"/>
    <property type="project" value="ComplexPortal"/>
</dbReference>
<dbReference type="GO" id="GO:0008541">
    <property type="term" value="C:proteasome regulatory particle, lid subcomplex"/>
    <property type="evidence" value="ECO:0000314"/>
    <property type="project" value="UniProtKB"/>
</dbReference>
<dbReference type="GO" id="GO:0034515">
    <property type="term" value="C:proteasome storage granule"/>
    <property type="evidence" value="ECO:0000314"/>
    <property type="project" value="SGD"/>
</dbReference>
<dbReference type="GO" id="GO:0005198">
    <property type="term" value="F:structural molecule activity"/>
    <property type="evidence" value="ECO:0000315"/>
    <property type="project" value="SGD"/>
</dbReference>
<dbReference type="GO" id="GO:0043248">
    <property type="term" value="P:proteasome assembly"/>
    <property type="evidence" value="ECO:0000315"/>
    <property type="project" value="UniProtKB"/>
</dbReference>
<dbReference type="GO" id="GO:0043161">
    <property type="term" value="P:proteasome-mediated ubiquitin-dependent protein catabolic process"/>
    <property type="evidence" value="ECO:0000314"/>
    <property type="project" value="ComplexPortal"/>
</dbReference>
<dbReference type="GO" id="GO:0006511">
    <property type="term" value="P:ubiquitin-dependent protein catabolic process"/>
    <property type="evidence" value="ECO:0000315"/>
    <property type="project" value="UniProtKB"/>
</dbReference>
<dbReference type="FunFam" id="1.25.40.570:FF:000010">
    <property type="entry name" value="26S proteasome regulatory subunit RPN6"/>
    <property type="match status" value="1"/>
</dbReference>
<dbReference type="Gene3D" id="1.25.40.570">
    <property type="match status" value="1"/>
</dbReference>
<dbReference type="InterPro" id="IPR050871">
    <property type="entry name" value="26S_Proteasome/COP9_Components"/>
</dbReference>
<dbReference type="InterPro" id="IPR000717">
    <property type="entry name" value="PCI_dom"/>
</dbReference>
<dbReference type="InterPro" id="IPR040780">
    <property type="entry name" value="Rpn6_C_helix"/>
</dbReference>
<dbReference type="InterPro" id="IPR040773">
    <property type="entry name" value="Rpn6_N"/>
</dbReference>
<dbReference type="InterPro" id="IPR011990">
    <property type="entry name" value="TPR-like_helical_dom_sf"/>
</dbReference>
<dbReference type="InterPro" id="IPR036390">
    <property type="entry name" value="WH_DNA-bd_sf"/>
</dbReference>
<dbReference type="PANTHER" id="PTHR10678">
    <property type="entry name" value="26S PROTEASOME NON-ATPASE REGULATORY SUBUNIT 11/COP9 SIGNALOSOME COMPLEX SUBUNIT 2"/>
    <property type="match status" value="1"/>
</dbReference>
<dbReference type="Pfam" id="PF01399">
    <property type="entry name" value="PCI"/>
    <property type="match status" value="1"/>
</dbReference>
<dbReference type="Pfam" id="PF18503">
    <property type="entry name" value="RPN6_C_helix"/>
    <property type="match status" value="1"/>
</dbReference>
<dbReference type="Pfam" id="PF18055">
    <property type="entry name" value="RPN6_N"/>
    <property type="match status" value="1"/>
</dbReference>
<dbReference type="SMART" id="SM00753">
    <property type="entry name" value="PAM"/>
    <property type="match status" value="1"/>
</dbReference>
<dbReference type="SMART" id="SM00088">
    <property type="entry name" value="PINT"/>
    <property type="match status" value="1"/>
</dbReference>
<dbReference type="SUPFAM" id="SSF48452">
    <property type="entry name" value="TPR-like"/>
    <property type="match status" value="1"/>
</dbReference>
<dbReference type="SUPFAM" id="SSF46785">
    <property type="entry name" value="Winged helix' DNA-binding domain"/>
    <property type="match status" value="1"/>
</dbReference>
<dbReference type="PROSITE" id="PS50250">
    <property type="entry name" value="PCI"/>
    <property type="match status" value="1"/>
</dbReference>
<proteinExistence type="evidence at protein level"/>
<reference key="1">
    <citation type="journal article" date="1996" name="Yeast">
        <title>The sequence of a 16,691 bp segment of Saccharomyces cerevisiae chromosome IV identifies the DUN1, PMT1, PMT5, SRP14 and DPR1 genes, and five new open reading frames.</title>
        <authorList>
            <person name="Boskovic J."/>
            <person name="Soler-Mira A."/>
            <person name="Garcia-Cantalejo J.M."/>
            <person name="Ballesta J.P.G."/>
            <person name="Jimenez A."/>
            <person name="Remacha M.A."/>
        </authorList>
    </citation>
    <scope>NUCLEOTIDE SEQUENCE [GENOMIC DNA]</scope>
    <source>
        <strain>ATCC 96604 / S288c / FY1679</strain>
    </source>
</reference>
<reference key="2">
    <citation type="journal article" date="1997" name="Nature">
        <title>The nucleotide sequence of Saccharomyces cerevisiae chromosome IV.</title>
        <authorList>
            <person name="Jacq C."/>
            <person name="Alt-Moerbe J."/>
            <person name="Andre B."/>
            <person name="Arnold W."/>
            <person name="Bahr A."/>
            <person name="Ballesta J.P.G."/>
            <person name="Bargues M."/>
            <person name="Baron L."/>
            <person name="Becker A."/>
            <person name="Biteau N."/>
            <person name="Bloecker H."/>
            <person name="Blugeon C."/>
            <person name="Boskovic J."/>
            <person name="Brandt P."/>
            <person name="Brueckner M."/>
            <person name="Buitrago M.J."/>
            <person name="Coster F."/>
            <person name="Delaveau T."/>
            <person name="del Rey F."/>
            <person name="Dujon B."/>
            <person name="Eide L.G."/>
            <person name="Garcia-Cantalejo J.M."/>
            <person name="Goffeau A."/>
            <person name="Gomez-Peris A."/>
            <person name="Granotier C."/>
            <person name="Hanemann V."/>
            <person name="Hankeln T."/>
            <person name="Hoheisel J.D."/>
            <person name="Jaeger W."/>
            <person name="Jimenez A."/>
            <person name="Jonniaux J.-L."/>
            <person name="Kraemer C."/>
            <person name="Kuester H."/>
            <person name="Laamanen P."/>
            <person name="Legros Y."/>
            <person name="Louis E.J."/>
            <person name="Moeller-Rieker S."/>
            <person name="Monnet A."/>
            <person name="Moro M."/>
            <person name="Mueller-Auer S."/>
            <person name="Nussbaumer B."/>
            <person name="Paricio N."/>
            <person name="Paulin L."/>
            <person name="Perea J."/>
            <person name="Perez-Alonso M."/>
            <person name="Perez-Ortin J.E."/>
            <person name="Pohl T.M."/>
            <person name="Prydz H."/>
            <person name="Purnelle B."/>
            <person name="Rasmussen S.W."/>
            <person name="Remacha M.A."/>
            <person name="Revuelta J.L."/>
            <person name="Rieger M."/>
            <person name="Salom D."/>
            <person name="Saluz H.P."/>
            <person name="Saiz J.E."/>
            <person name="Saren A.-M."/>
            <person name="Schaefer M."/>
            <person name="Scharfe M."/>
            <person name="Schmidt E.R."/>
            <person name="Schneider C."/>
            <person name="Scholler P."/>
            <person name="Schwarz S."/>
            <person name="Soler-Mira A."/>
            <person name="Urrestarazu L.A."/>
            <person name="Verhasselt P."/>
            <person name="Vissers S."/>
            <person name="Voet M."/>
            <person name="Volckaert G."/>
            <person name="Wagner G."/>
            <person name="Wambutt R."/>
            <person name="Wedler E."/>
            <person name="Wedler H."/>
            <person name="Woelfl S."/>
            <person name="Harris D.E."/>
            <person name="Bowman S."/>
            <person name="Brown D."/>
            <person name="Churcher C.M."/>
            <person name="Connor R."/>
            <person name="Dedman K."/>
            <person name="Gentles S."/>
            <person name="Hamlin N."/>
            <person name="Hunt S."/>
            <person name="Jones L."/>
            <person name="McDonald S."/>
            <person name="Murphy L.D."/>
            <person name="Niblett D."/>
            <person name="Odell C."/>
            <person name="Oliver K."/>
            <person name="Rajandream M.A."/>
            <person name="Richards C."/>
            <person name="Shore L."/>
            <person name="Walsh S.V."/>
            <person name="Barrell B.G."/>
            <person name="Dietrich F.S."/>
            <person name="Mulligan J.T."/>
            <person name="Allen E."/>
            <person name="Araujo R."/>
            <person name="Aviles E."/>
            <person name="Berno A."/>
            <person name="Carpenter J."/>
            <person name="Chen E."/>
            <person name="Cherry J.M."/>
            <person name="Chung E."/>
            <person name="Duncan M."/>
            <person name="Hunicke-Smith S."/>
            <person name="Hyman R.W."/>
            <person name="Komp C."/>
            <person name="Lashkari D."/>
            <person name="Lew H."/>
            <person name="Lin D."/>
            <person name="Mosedale D."/>
            <person name="Nakahara K."/>
            <person name="Namath A."/>
            <person name="Oefner P."/>
            <person name="Oh C."/>
            <person name="Petel F.X."/>
            <person name="Roberts D."/>
            <person name="Schramm S."/>
            <person name="Schroeder M."/>
            <person name="Shogren T."/>
            <person name="Shroff N."/>
            <person name="Winant A."/>
            <person name="Yelton M.A."/>
            <person name="Botstein D."/>
            <person name="Davis R.W."/>
            <person name="Johnston M."/>
            <person name="Andrews S."/>
            <person name="Brinkman R."/>
            <person name="Cooper J."/>
            <person name="Ding H."/>
            <person name="Du Z."/>
            <person name="Favello A."/>
            <person name="Fulton L."/>
            <person name="Gattung S."/>
            <person name="Greco T."/>
            <person name="Hallsworth K."/>
            <person name="Hawkins J."/>
            <person name="Hillier L.W."/>
            <person name="Jier M."/>
            <person name="Johnson D."/>
            <person name="Johnston L."/>
            <person name="Kirsten J."/>
            <person name="Kucaba T."/>
            <person name="Langston Y."/>
            <person name="Latreille P."/>
            <person name="Le T."/>
            <person name="Mardis E."/>
            <person name="Menezes S."/>
            <person name="Miller N."/>
            <person name="Nhan M."/>
            <person name="Pauley A."/>
            <person name="Peluso D."/>
            <person name="Rifkin L."/>
            <person name="Riles L."/>
            <person name="Taich A."/>
            <person name="Trevaskis E."/>
            <person name="Vignati D."/>
            <person name="Wilcox L."/>
            <person name="Wohldman P."/>
            <person name="Vaudin M."/>
            <person name="Wilson R."/>
            <person name="Waterston R."/>
            <person name="Albermann K."/>
            <person name="Hani J."/>
            <person name="Heumann K."/>
            <person name="Kleine K."/>
            <person name="Mewes H.-W."/>
            <person name="Zollner A."/>
            <person name="Zaccaria P."/>
        </authorList>
    </citation>
    <scope>NUCLEOTIDE SEQUENCE [LARGE SCALE GENOMIC DNA]</scope>
    <source>
        <strain>ATCC 204508 / S288c</strain>
    </source>
</reference>
<reference key="3">
    <citation type="journal article" date="2014" name="G3 (Bethesda)">
        <title>The reference genome sequence of Saccharomyces cerevisiae: Then and now.</title>
        <authorList>
            <person name="Engel S.R."/>
            <person name="Dietrich F.S."/>
            <person name="Fisk D.G."/>
            <person name="Binkley G."/>
            <person name="Balakrishnan R."/>
            <person name="Costanzo M.C."/>
            <person name="Dwight S.S."/>
            <person name="Hitz B.C."/>
            <person name="Karra K."/>
            <person name="Nash R.S."/>
            <person name="Weng S."/>
            <person name="Wong E.D."/>
            <person name="Lloyd P."/>
            <person name="Skrzypek M.S."/>
            <person name="Miyasato S.R."/>
            <person name="Simison M."/>
            <person name="Cherry J.M."/>
        </authorList>
    </citation>
    <scope>GENOME REANNOTATION</scope>
    <source>
        <strain>ATCC 204508 / S288c</strain>
    </source>
</reference>
<reference key="4">
    <citation type="journal article" date="2003" name="Arch. Biochem. Biophys.">
        <title>N-terminal modifications of the 19S regulatory particle subunits of the yeast proteasome.</title>
        <authorList>
            <person name="Kimura Y."/>
            <person name="Saeki Y."/>
            <person name="Yokosawa H."/>
            <person name="Polevoda B."/>
            <person name="Sherman F."/>
            <person name="Hirano H."/>
        </authorList>
    </citation>
    <scope>PROTEIN SEQUENCE OF 2-9</scope>
    <scope>ACETYLATION AT SER-2</scope>
</reference>
<reference key="5">
    <citation type="journal article" date="1997" name="Gene">
        <title>cDNA cloning and functional analysis of p44.5 and p55, two regulatory subunits of the 26S proteasome.</title>
        <authorList>
            <person name="Saito A."/>
            <person name="Watanabe T.K."/>
            <person name="Shimada Y."/>
            <person name="Fujiwara T."/>
            <person name="Slaughter C.A."/>
            <person name="DeMartino G.N."/>
            <person name="Tanahashi N."/>
            <person name="Tanaka K."/>
        </authorList>
    </citation>
    <scope>FUNCTION</scope>
</reference>
<reference key="6">
    <citation type="journal article" date="2003" name="J. Biol. Chem.">
        <title>Rpn6p, a proteasome subunit from Saccharomyces cerevisiae, is essential for the assembly and activity of the 26 S proteasome.</title>
        <authorList>
            <person name="Santamaria P.G."/>
            <person name="Finley D."/>
            <person name="Ballesta J.P."/>
            <person name="Remacha M."/>
        </authorList>
    </citation>
    <scope>FUNCTION</scope>
    <scope>IDENTIFICATION IN THE 19S PROTEASOME REGULATORY COMPLEX</scope>
</reference>
<reference key="7">
    <citation type="journal article" date="2003" name="Nature">
        <title>Global analysis of protein expression in yeast.</title>
        <authorList>
            <person name="Ghaemmaghami S."/>
            <person name="Huh W.-K."/>
            <person name="Bower K."/>
            <person name="Howson R.W."/>
            <person name="Belle A."/>
            <person name="Dephoure N."/>
            <person name="O'Shea E.K."/>
            <person name="Weissman J.S."/>
        </authorList>
    </citation>
    <scope>LEVEL OF PROTEIN EXPRESSION [LARGE SCALE ANALYSIS]</scope>
</reference>
<reference key="8">
    <citation type="journal article" date="2005" name="J. Biol. Chem.">
        <title>Functional analysis of Rpn6p, a lid component of the 26 S proteasome, using temperature-sensitive rpn6 mutants of the yeast Saccharomyces cerevisiae.</title>
        <authorList>
            <person name="Isono E."/>
            <person name="Saito N."/>
            <person name="Kamata N."/>
            <person name="Saeki Y."/>
            <person name="Toh-E A."/>
        </authorList>
    </citation>
    <scope>FUNCTION</scope>
    <scope>IDENTIFICATION IN THE 19S PROTEASOME REGULATORY COMPLEX</scope>
    <scope>MUTAGENESIS OF PHE-132 AND LEU-377</scope>
</reference>
<reference key="9">
    <citation type="journal article" date="2012" name="Proc. Natl. Acad. Sci. U.S.A.">
        <title>N-terminal acetylome analyses and functional insights of the N-terminal acetyltransferase NatB.</title>
        <authorList>
            <person name="Van Damme P."/>
            <person name="Lasa M."/>
            <person name="Polevoda B."/>
            <person name="Gazquez C."/>
            <person name="Elosegui-Artola A."/>
            <person name="Kim D.S."/>
            <person name="De Juan-Pardo E."/>
            <person name="Demeyer K."/>
            <person name="Hole K."/>
            <person name="Larrea E."/>
            <person name="Timmerman E."/>
            <person name="Prieto J."/>
            <person name="Arnesen T."/>
            <person name="Sherman F."/>
            <person name="Gevaert K."/>
            <person name="Aldabe R."/>
        </authorList>
    </citation>
    <scope>ACETYLATION [LARGE SCALE ANALYSIS] AT SER-2</scope>
    <scope>CLEAVAGE OF INITIATOR METHIONINE [LARGE SCALE ANALYSIS]</scope>
    <scope>IDENTIFICATION BY MASS SPECTROMETRY [LARGE SCALE ANALYSIS]</scope>
</reference>
<reference key="10">
    <citation type="journal article" date="2012" name="Proc. Natl. Acad. Sci. U.S.A.">
        <title>Near-atomic resolution structural model of the yeast 26S proteasome.</title>
        <authorList>
            <person name="Beck F."/>
            <person name="Unverdorben P."/>
            <person name="Bohn S."/>
            <person name="Schweitzer A."/>
            <person name="Pfeifer G."/>
            <person name="Sakata E."/>
            <person name="Nickell S."/>
            <person name="Plitzko J.M."/>
            <person name="Villa E."/>
            <person name="Baumeister W."/>
            <person name="Forster F."/>
        </authorList>
    </citation>
    <scope>STRUCTURE BY ELECTRON MICROSCOPY (7.4 ANGSTROMS) OF THE 26S PROTEASOME</scope>
</reference>
<comment type="function">
    <text evidence="2 5 6">Component of the lid subcomplex of the 26S proteasome, a multiprotein complex involved in the ATP-dependent degradation of ubiquitinated proteins. In the complex, RPN6 is required for proteasome assembly.</text>
</comment>
<comment type="subunit">
    <text evidence="2 5">Component of the lid subcomplex of the 19S proteasome regulatory particle complex (also named PA700 complex). The 26S proteasome consists of a 20S proteasome core and two 19S regulatory subunits.</text>
</comment>
<comment type="interaction">
    <interactant intactId="EBI-308">
        <id>Q12377</id>
    </interactant>
    <interactant intactId="EBI-15935">
        <id>Q12250</id>
        <label>RPN5</label>
    </interactant>
    <organismsDiffer>false</organismsDiffer>
    <experiments>9</experiments>
</comment>
<comment type="interaction">
    <interactant intactId="EBI-308">
        <id>Q12377</id>
    </interactant>
    <interactant intactId="EBI-36176">
        <id>Q08723</id>
        <label>RPN8</label>
    </interactant>
    <organismsDiffer>false</organismsDiffer>
    <experiments>4</experiments>
</comment>
<comment type="interaction">
    <interactant intactId="EBI-308">
        <id>Q12377</id>
    </interactant>
    <interactant intactId="EBI-15944">
        <id>Q04062</id>
        <label>RPN9</label>
    </interactant>
    <organismsDiffer>false</organismsDiffer>
    <experiments>4</experiments>
</comment>
<comment type="PTM">
    <text evidence="3">N-acetylated by NAT1.</text>
</comment>
<comment type="miscellaneous">
    <text evidence="4">Present with 16800 molecules/cell in log phase SD medium.</text>
</comment>
<comment type="similarity">
    <text evidence="7">Belongs to the proteasome subunit S9 family.</text>
</comment>
<organism>
    <name type="scientific">Saccharomyces cerevisiae (strain ATCC 204508 / S288c)</name>
    <name type="common">Baker's yeast</name>
    <dbReference type="NCBI Taxonomy" id="559292"/>
    <lineage>
        <taxon>Eukaryota</taxon>
        <taxon>Fungi</taxon>
        <taxon>Dikarya</taxon>
        <taxon>Ascomycota</taxon>
        <taxon>Saccharomycotina</taxon>
        <taxon>Saccharomycetes</taxon>
        <taxon>Saccharomycetales</taxon>
        <taxon>Saccharomycetaceae</taxon>
        <taxon>Saccharomyces</taxon>
    </lineage>
</organism>
<evidence type="ECO:0000255" key="1">
    <source>
        <dbReference type="PROSITE-ProRule" id="PRU01185"/>
    </source>
</evidence>
<evidence type="ECO:0000269" key="2">
    <source>
    </source>
</evidence>
<evidence type="ECO:0000269" key="3">
    <source>
    </source>
</evidence>
<evidence type="ECO:0000269" key="4">
    <source>
    </source>
</evidence>
<evidence type="ECO:0000269" key="5">
    <source>
    </source>
</evidence>
<evidence type="ECO:0000269" key="6">
    <source>
    </source>
</evidence>
<evidence type="ECO:0000305" key="7"/>
<evidence type="ECO:0007744" key="8">
    <source>
    </source>
</evidence>
<evidence type="ECO:0007829" key="9">
    <source>
        <dbReference type="PDB" id="3JCK"/>
    </source>
</evidence>
<protein>
    <recommendedName>
        <fullName>26S proteasome regulatory subunit RPN6</fullName>
    </recommendedName>
    <alternativeName>
        <fullName>Proteasome non-ATPase subunit 4</fullName>
    </alternativeName>
</protein>